<sequence>MGTRRVTPGCAAGLLVLLLRCFGLAEPSEFSGDDSFTIVNENTGKCIQPLSDWIVAQDCSETRSMLWKWVSQHRLFHLESQKCLGLDMTKAADNLRMFRCDSSVLLWWKCEHHSLYSAAHYRLDLKDGYATASTNSSAVWKKGGSKENLCDQPYREIYTRDGNSYGRPCEFPFLVGETWHHDCIRDENHSGPWCATTLNYEYDQKWGICLKPESGCEGNWEKNEQIGSCYQFNNQEVLSWKEAYVSCQNQGADLLSIHSAAELAYITGKEDIARIVWIGLNQLYSARGWEWSDFKPLKFLNWDPGTPSAPMIGGSSCARMDTETGLWRSVSCEAQQPYVCKKPLNNTVELPDVWTYSDTHCDVGWLPQNGFCYLLANESGPWDAAHLKCKAFGGDLISIHSLADVEVVVTKLHSGDVKEEIWTGLRNVNSPTLFQWSDGTEVTLTYWNENEPSVPYNKTPNCVSYLGKLGQWKVQSCEKKLRYVCKKKGEITNDTRSDKLCPPDEGWKRHGETCYKIYENEVPFGTNCNLTITSRFEQEFLNDMMKKYDKSFQKYFWTGLRDADARGEYSWAATGGLKQAMTFSNWNFLQPASPGGCVAMSTGKTLGRWEVKSCRSFRALSICKKMSGPQEPEEATPKPDEPCPEGWHTFPSNLSCYKVFHIERTVRRRTWEEAERFCQALGAHLPSFSHMNEVKEFLHLLQDQFSVQRWLWIGLNKRSPDLQGSWQWSDRTPVSTVIMHREFQQDYDVRDCAAIKVLDNAWLRTWYYYDERKFGYLKPFSCDAKLDWVCQIPKGSTLQVPDWYNPERTGIHGPPVIIDGSEYWFVEEPRLNYEEAVLYCASNHSFLATITTFTKLKAIRGKMENLSGEEQKWWVKANANPIDHYFLRTRPLWHRFSMLLDEECLQMSAKMWHLDLNKRADCNDKLPFVCEKYNVSSLEKYSPDSAAKVQCTGKWIPFQNKCFLKVKSEPVTFSQASSTCHTYGGTLPSVLSKSEQDFIISLLPEMETSLWIGLRWTAYDRISKWTDGRNLTYSNFHPLLVGRRLSIAAYFIDEESHYHCALMLNLRKSPLTGTWNFTSCSERHSLSLCQKYSENEDGRPWETNSETVKYLNNLYKIISKPLTWHGALKECLNENMRLVSITDPYQQAFLSVQATLRNTSFWIGLSSQDDELNFGWSDGTYLHFSNWAVDNEKLDDCVILDTDGFWKTADCDENQPGAICYYPGNETSKEVRPLNSAKCPSPAQSTPWVPFQNSCYNFMITKNRHRTITQKEVHSLCQKLHSKAQILSIRNEEENNFVVEQLLYFNYIASWVMLGVTYENNSLMWFDKTALSYTHWRAGRPAVKNHKFLAGLSTDGFWDIQSFNVIDETLHFYQHSILACKIEMVDYKEERNSTLPEFIPYEDGVYNVIQKRVTWYQALSMCSQSGRHLASVHNPKEQLFLEDIVNRDGFPLWVGLSSHDGSESSFEWSDGSAFDYIPWKSQGSPGNCVILDPKGTWKHENCLSVKDGAICYKPTKFKELASHAHSSKCPLVKRNGSQWVQYGDHCYSAEQALHTFAEAKKLCQELDHSATVVTIADENENKFVSRLMRENYNITMRVWLGLSQHSLDQSWSWLDGLDVTFVKWENKSKNGDGKCSILIASNETWKKVECSRGYARVVCKVPLSPDYRGIAVLFAVLSVLALISGLIWFLVQRNHFRWTGLSSVRYEHGANEDEVMLPSFHD</sequence>
<proteinExistence type="evidence at transcript level"/>
<reference evidence="9" key="1">
    <citation type="journal article" date="2002" name="Cancer Lett.">
        <title>Hamster DEC-205, its primary structure, tissue and cellular distribution.</title>
        <authorList>
            <person name="Maruyama K."/>
            <person name="Akiyama Y."/>
            <person name="Cheng J."/>
            <person name="Nara-Ashizawa N."/>
            <person name="Hojo T."/>
            <person name="Sasaki K."/>
            <person name="Yamaguchi K."/>
        </authorList>
    </citation>
    <scope>NUCLEOTIDE SEQUENCE [MRNA]</scope>
    <scope>SUBCELLULAR LOCATION</scope>
    <scope>TISSUE SPECIFICITY</scope>
    <source>
        <tissue>Bone marrow</tissue>
    </source>
</reference>
<accession>Q920P9</accession>
<gene>
    <name type="primary">LY75</name>
</gene>
<comment type="function">
    <text evidence="1">Acts as an endocytic receptor to direct captured antigens from the extracellular space to a specialized antigen-processing compartment. Causes reduced proliferation of B lymphocytes (By similarity).</text>
</comment>
<comment type="subcellular location">
    <subcellularLocation>
        <location evidence="8">Membrane</location>
        <topology evidence="8">Single-pass type I membrane protein</topology>
    </subcellularLocation>
</comment>
<comment type="tissue specificity">
    <text evidence="8">Expressed in the thymus and cultured bone marrow cells.</text>
</comment>
<keyword id="KW-1015">Disulfide bond</keyword>
<keyword id="KW-0254">Endocytosis</keyword>
<keyword id="KW-0325">Glycoprotein</keyword>
<keyword id="KW-0430">Lectin</keyword>
<keyword id="KW-0472">Membrane</keyword>
<keyword id="KW-0597">Phosphoprotein</keyword>
<keyword id="KW-0675">Receptor</keyword>
<keyword id="KW-1185">Reference proteome</keyword>
<keyword id="KW-0677">Repeat</keyword>
<keyword id="KW-0732">Signal</keyword>
<keyword id="KW-0812">Transmembrane</keyword>
<keyword id="KW-1133">Transmembrane helix</keyword>
<protein>
    <recommendedName>
        <fullName>Lymphocyte antigen 75</fullName>
        <shortName>Ly-75</shortName>
    </recommendedName>
    <alternativeName>
        <fullName>DEC-205</fullName>
    </alternativeName>
    <cdAntigenName>CD205</cdAntigenName>
</protein>
<name>LY75_MESAU</name>
<organism evidence="10">
    <name type="scientific">Mesocricetus auratus</name>
    <name type="common">Golden hamster</name>
    <dbReference type="NCBI Taxonomy" id="10036"/>
    <lineage>
        <taxon>Eukaryota</taxon>
        <taxon>Metazoa</taxon>
        <taxon>Chordata</taxon>
        <taxon>Craniata</taxon>
        <taxon>Vertebrata</taxon>
        <taxon>Euteleostomi</taxon>
        <taxon>Mammalia</taxon>
        <taxon>Eutheria</taxon>
        <taxon>Euarchontoglires</taxon>
        <taxon>Glires</taxon>
        <taxon>Rodentia</taxon>
        <taxon>Myomorpha</taxon>
        <taxon>Muroidea</taxon>
        <taxon>Cricetidae</taxon>
        <taxon>Cricetinae</taxon>
        <taxon>Mesocricetus</taxon>
    </lineage>
</organism>
<evidence type="ECO:0000250" key="1"/>
<evidence type="ECO:0000250" key="2">
    <source>
        <dbReference type="UniProtKB" id="O60449"/>
    </source>
</evidence>
<evidence type="ECO:0000250" key="3">
    <source>
        <dbReference type="UniProtKB" id="Q60767"/>
    </source>
</evidence>
<evidence type="ECO:0000255" key="4"/>
<evidence type="ECO:0000255" key="5">
    <source>
        <dbReference type="PROSITE-ProRule" id="PRU00040"/>
    </source>
</evidence>
<evidence type="ECO:0000255" key="6">
    <source>
        <dbReference type="PROSITE-ProRule" id="PRU00174"/>
    </source>
</evidence>
<evidence type="ECO:0000255" key="7">
    <source>
        <dbReference type="PROSITE-ProRule" id="PRU00479"/>
    </source>
</evidence>
<evidence type="ECO:0000269" key="8">
    <source>
    </source>
</evidence>
<evidence type="ECO:0000305" key="9"/>
<evidence type="ECO:0000312" key="10">
    <source>
        <dbReference type="EMBL" id="BAB69491.1"/>
    </source>
</evidence>
<dbReference type="EMBL" id="AB059273">
    <property type="protein sequence ID" value="BAB69491.1"/>
    <property type="molecule type" value="mRNA"/>
</dbReference>
<dbReference type="RefSeq" id="NP_001268813.1">
    <property type="nucleotide sequence ID" value="NM_001281884.1"/>
</dbReference>
<dbReference type="SMR" id="Q920P9"/>
<dbReference type="STRING" id="10036.ENSMAUP00000016585"/>
<dbReference type="GlyCosmos" id="Q920P9">
    <property type="glycosylation" value="13 sites, No reported glycans"/>
</dbReference>
<dbReference type="GeneID" id="101830769"/>
<dbReference type="KEGG" id="maua:101830769"/>
<dbReference type="CTD" id="4065"/>
<dbReference type="eggNOG" id="KOG4297">
    <property type="taxonomic scope" value="Eukaryota"/>
</dbReference>
<dbReference type="OrthoDB" id="6153550at2759"/>
<dbReference type="Proteomes" id="UP000189706">
    <property type="component" value="Unplaced"/>
</dbReference>
<dbReference type="GO" id="GO:0016020">
    <property type="term" value="C:membrane"/>
    <property type="evidence" value="ECO:0007669"/>
    <property type="project" value="UniProtKB-SubCell"/>
</dbReference>
<dbReference type="GO" id="GO:0030246">
    <property type="term" value="F:carbohydrate binding"/>
    <property type="evidence" value="ECO:0007669"/>
    <property type="project" value="UniProtKB-KW"/>
</dbReference>
<dbReference type="GO" id="GO:0006897">
    <property type="term" value="P:endocytosis"/>
    <property type="evidence" value="ECO:0007669"/>
    <property type="project" value="UniProtKB-KW"/>
</dbReference>
<dbReference type="CDD" id="cd00037">
    <property type="entry name" value="CLECT"/>
    <property type="match status" value="10"/>
</dbReference>
<dbReference type="CDD" id="cd00062">
    <property type="entry name" value="FN2"/>
    <property type="match status" value="1"/>
</dbReference>
<dbReference type="FunFam" id="3.10.100.10:FF:000036">
    <property type="entry name" value="Lymphocyte antigen 75"/>
    <property type="match status" value="1"/>
</dbReference>
<dbReference type="FunFam" id="3.10.100.10:FF:000052">
    <property type="entry name" value="Lymphocyte antigen 75"/>
    <property type="match status" value="1"/>
</dbReference>
<dbReference type="FunFam" id="3.10.100.10:FF:000060">
    <property type="entry name" value="Lymphocyte antigen 75"/>
    <property type="match status" value="1"/>
</dbReference>
<dbReference type="FunFam" id="3.10.100.10:FF:000063">
    <property type="entry name" value="Lymphocyte antigen 75"/>
    <property type="match status" value="1"/>
</dbReference>
<dbReference type="FunFam" id="3.10.100.10:FF:000066">
    <property type="entry name" value="Lymphocyte antigen 75"/>
    <property type="match status" value="1"/>
</dbReference>
<dbReference type="FunFam" id="3.10.100.10:FF:000047">
    <property type="entry name" value="lymphocyte antigen 75"/>
    <property type="match status" value="1"/>
</dbReference>
<dbReference type="FunFam" id="2.80.10.50:FF:000040">
    <property type="entry name" value="lymphocyte antigen 75 isoform X1"/>
    <property type="match status" value="1"/>
</dbReference>
<dbReference type="FunFam" id="3.10.100.10:FF:000067">
    <property type="entry name" value="lymphocyte antigen 75 isoform X1"/>
    <property type="match status" value="1"/>
</dbReference>
<dbReference type="FunFam" id="2.10.10.10:FF:000004">
    <property type="entry name" value="lymphocyte antigen 75 precursor"/>
    <property type="match status" value="1"/>
</dbReference>
<dbReference type="FunFam" id="3.10.100.10:FF:000043">
    <property type="entry name" value="lymphocyte antigen 75 precursor"/>
    <property type="match status" value="1"/>
</dbReference>
<dbReference type="FunFam" id="3.10.100.10:FF:000049">
    <property type="entry name" value="Lymphocyte antigen 75 variant"/>
    <property type="match status" value="1"/>
</dbReference>
<dbReference type="FunFam" id="3.10.100.10:FF:000051">
    <property type="entry name" value="Lymphocyte antigen 75 variant"/>
    <property type="match status" value="1"/>
</dbReference>
<dbReference type="Gene3D" id="2.80.10.50">
    <property type="match status" value="1"/>
</dbReference>
<dbReference type="Gene3D" id="2.10.10.10">
    <property type="entry name" value="Fibronectin, type II, collagen-binding"/>
    <property type="match status" value="1"/>
</dbReference>
<dbReference type="Gene3D" id="3.10.100.10">
    <property type="entry name" value="Mannose-Binding Protein A, subunit A"/>
    <property type="match status" value="10"/>
</dbReference>
<dbReference type="InterPro" id="IPR001304">
    <property type="entry name" value="C-type_lectin-like"/>
</dbReference>
<dbReference type="InterPro" id="IPR016186">
    <property type="entry name" value="C-type_lectin-like/link_sf"/>
</dbReference>
<dbReference type="InterPro" id="IPR050111">
    <property type="entry name" value="C-type_lectin/snaclec_domain"/>
</dbReference>
<dbReference type="InterPro" id="IPR018378">
    <property type="entry name" value="C-type_lectin_CS"/>
</dbReference>
<dbReference type="InterPro" id="IPR016187">
    <property type="entry name" value="CTDL_fold"/>
</dbReference>
<dbReference type="InterPro" id="IPR000562">
    <property type="entry name" value="FN_type2_dom"/>
</dbReference>
<dbReference type="InterPro" id="IPR036943">
    <property type="entry name" value="FN_type2_sf"/>
</dbReference>
<dbReference type="InterPro" id="IPR013806">
    <property type="entry name" value="Kringle-like"/>
</dbReference>
<dbReference type="InterPro" id="IPR035992">
    <property type="entry name" value="Ricin_B-like_lectins"/>
</dbReference>
<dbReference type="InterPro" id="IPR000772">
    <property type="entry name" value="Ricin_B_lectin"/>
</dbReference>
<dbReference type="PANTHER" id="PTHR22803">
    <property type="entry name" value="MANNOSE, PHOSPHOLIPASE, LECTIN RECEPTOR RELATED"/>
    <property type="match status" value="1"/>
</dbReference>
<dbReference type="Pfam" id="PF24562">
    <property type="entry name" value="CysR_MRC2_N"/>
    <property type="match status" value="1"/>
</dbReference>
<dbReference type="Pfam" id="PF00040">
    <property type="entry name" value="fn2"/>
    <property type="match status" value="1"/>
</dbReference>
<dbReference type="Pfam" id="PF00059">
    <property type="entry name" value="Lectin_C"/>
    <property type="match status" value="10"/>
</dbReference>
<dbReference type="SMART" id="SM00034">
    <property type="entry name" value="CLECT"/>
    <property type="match status" value="10"/>
</dbReference>
<dbReference type="SMART" id="SM00059">
    <property type="entry name" value="FN2"/>
    <property type="match status" value="1"/>
</dbReference>
<dbReference type="SMART" id="SM00458">
    <property type="entry name" value="RICIN"/>
    <property type="match status" value="1"/>
</dbReference>
<dbReference type="SUPFAM" id="SSF56436">
    <property type="entry name" value="C-type lectin-like"/>
    <property type="match status" value="10"/>
</dbReference>
<dbReference type="SUPFAM" id="SSF57440">
    <property type="entry name" value="Kringle-like"/>
    <property type="match status" value="1"/>
</dbReference>
<dbReference type="SUPFAM" id="SSF50370">
    <property type="entry name" value="Ricin B-like lectins"/>
    <property type="match status" value="1"/>
</dbReference>
<dbReference type="PROSITE" id="PS00615">
    <property type="entry name" value="C_TYPE_LECTIN_1"/>
    <property type="match status" value="1"/>
</dbReference>
<dbReference type="PROSITE" id="PS50041">
    <property type="entry name" value="C_TYPE_LECTIN_2"/>
    <property type="match status" value="9"/>
</dbReference>
<dbReference type="PROSITE" id="PS00023">
    <property type="entry name" value="FN2_1"/>
    <property type="match status" value="1"/>
</dbReference>
<dbReference type="PROSITE" id="PS51092">
    <property type="entry name" value="FN2_2"/>
    <property type="match status" value="1"/>
</dbReference>
<dbReference type="PROSITE" id="PS50231">
    <property type="entry name" value="RICIN_B_LECTIN"/>
    <property type="match status" value="1"/>
</dbReference>
<feature type="signal peptide" evidence="1">
    <location>
        <begin position="1"/>
        <end position="27"/>
    </location>
</feature>
<feature type="chain" id="PRO_0000017553" description="Lymphocyte antigen 75">
    <location>
        <begin position="28"/>
        <end position="1722"/>
    </location>
</feature>
<feature type="topological domain" description="Extracellular" evidence="4">
    <location>
        <begin position="28"/>
        <end position="1666"/>
    </location>
</feature>
<feature type="transmembrane region" description="Helical" evidence="4">
    <location>
        <begin position="1667"/>
        <end position="1691"/>
    </location>
</feature>
<feature type="topological domain" description="Cytoplasmic" evidence="4">
    <location>
        <begin position="1692"/>
        <end position="1722"/>
    </location>
</feature>
<feature type="domain" description="Ricin B-type lectin" evidence="6">
    <location>
        <begin position="32"/>
        <end position="182"/>
    </location>
</feature>
<feature type="domain" description="Fibronectin type-II" evidence="7">
    <location>
        <begin position="164"/>
        <end position="211"/>
    </location>
</feature>
<feature type="domain" description="C-type lectin 1" evidence="5">
    <location>
        <begin position="225"/>
        <end position="341"/>
    </location>
</feature>
<feature type="domain" description="C-type lectin 2" evidence="5">
    <location>
        <begin position="368"/>
        <end position="486"/>
    </location>
</feature>
<feature type="domain" description="C-type lectin 3" evidence="5">
    <location>
        <begin position="493"/>
        <end position="625"/>
    </location>
</feature>
<feature type="domain" description="C-type lectin 4" evidence="5">
    <location>
        <begin position="652"/>
        <end position="791"/>
    </location>
</feature>
<feature type="domain" description="C-type lectin 5" evidence="5">
    <location>
        <begin position="958"/>
        <end position="1091"/>
    </location>
</feature>
<feature type="domain" description="C-type lectin 6" evidence="5">
    <location>
        <begin position="1110"/>
        <end position="1222"/>
    </location>
</feature>
<feature type="domain" description="C-type lectin 7" evidence="5">
    <location>
        <begin position="1251"/>
        <end position="1374"/>
    </location>
</feature>
<feature type="domain" description="C-type lectin 8" evidence="5">
    <location>
        <begin position="1401"/>
        <end position="1513"/>
    </location>
</feature>
<feature type="domain" description="C-type lectin 9" evidence="5">
    <location>
        <begin position="1542"/>
        <end position="1661"/>
    </location>
</feature>
<feature type="modified residue" description="Phosphotyrosine" evidence="2">
    <location>
        <position position="933"/>
    </location>
</feature>
<feature type="modified residue" description="Phosphoserine" evidence="3">
    <location>
        <position position="1703"/>
    </location>
</feature>
<feature type="modified residue" description="Phosphoserine" evidence="3">
    <location>
        <position position="1719"/>
    </location>
</feature>
<feature type="glycosylation site" description="N-linked (GlcNAc...) asparagine" evidence="4">
    <location>
        <position position="135"/>
    </location>
</feature>
<feature type="glycosylation site" description="N-linked (GlcNAc...) asparagine" evidence="4">
    <location>
        <position position="345"/>
    </location>
</feature>
<feature type="glycosylation site" description="N-linked (GlcNAc...) asparagine" evidence="4">
    <location>
        <position position="377"/>
    </location>
</feature>
<feature type="glycosylation site" description="N-linked (GlcNAc...) asparagine" evidence="4">
    <location>
        <position position="529"/>
    </location>
</feature>
<feature type="glycosylation site" description="N-linked (GlcNAc...) asparagine" evidence="4">
    <location>
        <position position="843"/>
    </location>
</feature>
<feature type="glycosylation site" description="N-linked (GlcNAc...) asparagine" evidence="4">
    <location>
        <position position="865"/>
    </location>
</feature>
<feature type="glycosylation site" description="N-linked (GlcNAc...) asparagine" evidence="4">
    <location>
        <position position="934"/>
    </location>
</feature>
<feature type="glycosylation site" description="N-linked (GlcNAc...) asparagine" evidence="4">
    <location>
        <position position="1076"/>
    </location>
</feature>
<feature type="glycosylation site" description="N-linked (GlcNAc...) asparagine" evidence="4">
    <location>
        <position position="1225"/>
    </location>
</feature>
<feature type="glycosylation site" description="N-linked (GlcNAc...) asparagine" evidence="4">
    <location>
        <position position="1320"/>
    </location>
</feature>
<feature type="glycosylation site" description="N-linked (GlcNAc...) asparagine" evidence="4">
    <location>
        <position position="1392"/>
    </location>
</feature>
<feature type="glycosylation site" description="N-linked (GlcNAc...) asparagine" evidence="4">
    <location>
        <position position="1593"/>
    </location>
</feature>
<feature type="glycosylation site" description="N-linked (GlcNAc...) asparagine" evidence="4">
    <location>
        <position position="1626"/>
    </location>
</feature>
<feature type="disulfide bond" evidence="1">
    <location>
        <begin position="169"/>
        <end position="194"/>
    </location>
</feature>
<feature type="disulfide bond" evidence="1">
    <location>
        <begin position="183"/>
        <end position="209"/>
    </location>
</feature>
<feature type="disulfide bond" evidence="1">
    <location>
        <begin position="247"/>
        <end position="340"/>
    </location>
</feature>
<feature type="disulfide bond" evidence="1">
    <location>
        <begin position="317"/>
        <end position="332"/>
    </location>
</feature>
<feature type="disulfide bond" evidence="1">
    <location>
        <begin position="389"/>
        <end position="485"/>
    </location>
</feature>
<feature type="disulfide bond" evidence="1">
    <location>
        <begin position="462"/>
        <end position="477"/>
    </location>
</feature>
<feature type="disulfide bond" evidence="1">
    <location>
        <begin position="597"/>
        <end position="614"/>
    </location>
</feature>
<feature type="disulfide bond" evidence="1">
    <location>
        <begin position="678"/>
        <end position="790"/>
    </location>
</feature>
<feature type="disulfide bond" evidence="1">
    <location>
        <begin position="752"/>
        <end position="782"/>
    </location>
</feature>
<feature type="disulfide bond" evidence="1">
    <location>
        <begin position="1060"/>
        <end position="1080"/>
    </location>
</feature>
<feature type="disulfide bond" evidence="1">
    <location>
        <begin position="1197"/>
        <end position="1211"/>
    </location>
</feature>
<feature type="disulfide bond" evidence="1">
    <location>
        <begin position="1488"/>
        <end position="1502"/>
    </location>
</feature>
<feature type="disulfide bond" evidence="1">
    <location>
        <begin position="1635"/>
        <end position="1650"/>
    </location>
</feature>